<protein>
    <recommendedName>
        <fullName evidence="1">Small ribosomal subunit protein uS9</fullName>
    </recommendedName>
    <alternativeName>
        <fullName evidence="2">30S ribosomal protein S9</fullName>
    </alternativeName>
</protein>
<name>RS9_BARBK</name>
<sequence>MAELNSLSELSAVTNAVEVNKNIAPVHVQKLDSQGRSYATGKRKDAVARVWIKPGTGKITVNNKEFEQYFARPVLRMILRQPIVIAKRDTQYDVVATVAGGGLSGQAGAIRHGISKALTYYEPALRTILKKGGFLTRDSRVVERKKYGKAKARRSFQFSKR</sequence>
<evidence type="ECO:0000255" key="1">
    <source>
        <dbReference type="HAMAP-Rule" id="MF_00532"/>
    </source>
</evidence>
<evidence type="ECO:0000305" key="2"/>
<reference key="1">
    <citation type="submission" date="2006-12" db="EMBL/GenBank/DDBJ databases">
        <authorList>
            <person name="Hendrix L."/>
            <person name="Mohamoud Y."/>
            <person name="Radune D."/>
            <person name="Shvartsbeyn A."/>
            <person name="Daugherty S."/>
            <person name="Dodson R."/>
            <person name="Durkin A.S."/>
            <person name="Harkins D."/>
            <person name="Huot H."/>
            <person name="Kothari S.P."/>
            <person name="Madupu R."/>
            <person name="Li J."/>
            <person name="Nelson W.C."/>
            <person name="Shrivastava S."/>
            <person name="Giglio M.G."/>
            <person name="Haft D."/>
            <person name="Selengut J."/>
            <person name="Fraser-Ligget C."/>
            <person name="Seshadri R."/>
        </authorList>
    </citation>
    <scope>NUCLEOTIDE SEQUENCE [LARGE SCALE GENOMIC DNA]</scope>
    <source>
        <strain>ATCC 35685 / KC583 / Herrer 020/F12,63</strain>
    </source>
</reference>
<feature type="chain" id="PRO_1000051167" description="Small ribosomal subunit protein uS9">
    <location>
        <begin position="1"/>
        <end position="161"/>
    </location>
</feature>
<organism>
    <name type="scientific">Bartonella bacilliformis (strain ATCC 35685 / KC583 / Herrer 020/F12,63)</name>
    <dbReference type="NCBI Taxonomy" id="360095"/>
    <lineage>
        <taxon>Bacteria</taxon>
        <taxon>Pseudomonadati</taxon>
        <taxon>Pseudomonadota</taxon>
        <taxon>Alphaproteobacteria</taxon>
        <taxon>Hyphomicrobiales</taxon>
        <taxon>Bartonellaceae</taxon>
        <taxon>Bartonella</taxon>
    </lineage>
</organism>
<gene>
    <name evidence="1" type="primary">rpsI</name>
    <name type="ordered locus">BARBAKC583_0902</name>
</gene>
<keyword id="KW-0687">Ribonucleoprotein</keyword>
<keyword id="KW-0689">Ribosomal protein</keyword>
<accession>A1UT84</accession>
<comment type="similarity">
    <text evidence="1">Belongs to the universal ribosomal protein uS9 family.</text>
</comment>
<dbReference type="EMBL" id="CP000524">
    <property type="protein sequence ID" value="ABM44589.1"/>
    <property type="molecule type" value="Genomic_DNA"/>
</dbReference>
<dbReference type="RefSeq" id="WP_005767333.1">
    <property type="nucleotide sequence ID" value="NC_008783.1"/>
</dbReference>
<dbReference type="SMR" id="A1UT84"/>
<dbReference type="STRING" id="360095.BARBAKC583_0902"/>
<dbReference type="GeneID" id="4683910"/>
<dbReference type="KEGG" id="bbk:BARBAKC583_0902"/>
<dbReference type="PATRIC" id="fig|360095.6.peg.878"/>
<dbReference type="eggNOG" id="COG0103">
    <property type="taxonomic scope" value="Bacteria"/>
</dbReference>
<dbReference type="HOGENOM" id="CLU_046483_2_0_5"/>
<dbReference type="OrthoDB" id="9803965at2"/>
<dbReference type="Proteomes" id="UP000000643">
    <property type="component" value="Chromosome"/>
</dbReference>
<dbReference type="GO" id="GO:0022627">
    <property type="term" value="C:cytosolic small ribosomal subunit"/>
    <property type="evidence" value="ECO:0007669"/>
    <property type="project" value="TreeGrafter"/>
</dbReference>
<dbReference type="GO" id="GO:0003723">
    <property type="term" value="F:RNA binding"/>
    <property type="evidence" value="ECO:0007669"/>
    <property type="project" value="TreeGrafter"/>
</dbReference>
<dbReference type="GO" id="GO:0003735">
    <property type="term" value="F:structural constituent of ribosome"/>
    <property type="evidence" value="ECO:0007669"/>
    <property type="project" value="InterPro"/>
</dbReference>
<dbReference type="GO" id="GO:0006412">
    <property type="term" value="P:translation"/>
    <property type="evidence" value="ECO:0007669"/>
    <property type="project" value="UniProtKB-UniRule"/>
</dbReference>
<dbReference type="FunFam" id="3.30.230.10:FF:000034">
    <property type="entry name" value="30S ribosomal protein S9"/>
    <property type="match status" value="1"/>
</dbReference>
<dbReference type="Gene3D" id="3.30.230.10">
    <property type="match status" value="1"/>
</dbReference>
<dbReference type="HAMAP" id="MF_00532_B">
    <property type="entry name" value="Ribosomal_uS9_B"/>
    <property type="match status" value="1"/>
</dbReference>
<dbReference type="InterPro" id="IPR020568">
    <property type="entry name" value="Ribosomal_Su5_D2-typ_SF"/>
</dbReference>
<dbReference type="InterPro" id="IPR000754">
    <property type="entry name" value="Ribosomal_uS9"/>
</dbReference>
<dbReference type="InterPro" id="IPR023035">
    <property type="entry name" value="Ribosomal_uS9_bac/plastid"/>
</dbReference>
<dbReference type="InterPro" id="IPR020574">
    <property type="entry name" value="Ribosomal_uS9_CS"/>
</dbReference>
<dbReference type="InterPro" id="IPR014721">
    <property type="entry name" value="Ribsml_uS5_D2-typ_fold_subgr"/>
</dbReference>
<dbReference type="NCBIfam" id="NF001099">
    <property type="entry name" value="PRK00132.1"/>
    <property type="match status" value="1"/>
</dbReference>
<dbReference type="PANTHER" id="PTHR21569">
    <property type="entry name" value="RIBOSOMAL PROTEIN S9"/>
    <property type="match status" value="1"/>
</dbReference>
<dbReference type="PANTHER" id="PTHR21569:SF1">
    <property type="entry name" value="SMALL RIBOSOMAL SUBUNIT PROTEIN US9M"/>
    <property type="match status" value="1"/>
</dbReference>
<dbReference type="Pfam" id="PF00380">
    <property type="entry name" value="Ribosomal_S9"/>
    <property type="match status" value="1"/>
</dbReference>
<dbReference type="SUPFAM" id="SSF54211">
    <property type="entry name" value="Ribosomal protein S5 domain 2-like"/>
    <property type="match status" value="1"/>
</dbReference>
<dbReference type="PROSITE" id="PS00360">
    <property type="entry name" value="RIBOSOMAL_S9"/>
    <property type="match status" value="1"/>
</dbReference>
<proteinExistence type="inferred from homology"/>